<accession>Q5RCH2</accession>
<accession>Q5R6G7</accession>
<reference key="1">
    <citation type="submission" date="2004-11" db="EMBL/GenBank/DDBJ databases">
        <authorList>
            <consortium name="The German cDNA consortium"/>
        </authorList>
    </citation>
    <scope>NUCLEOTIDE SEQUENCE [LARGE SCALE MRNA]</scope>
    <source>
        <tissue>Heart</tissue>
    </source>
</reference>
<sequence length="525" mass="58124">MSCQLLPVLLLLLLRASCPWGHEQGPRSPSEEPPEEEIPKEDGILVLSRHTLGLALREHPALLVEFYAPWCGHCQALAPEYSKAAAVLAAESSVVMLAKVDGPAQPELAEEFGVTEYPTLKFFRDGNRTHPEEYTGPREAEGIAEWLRRRVGPSAMRLEDEAAAQALIDGRDLVVIGFFQDLHDEDVATFLALAQDALDMTFGLTDRPQLFQQFGLTKDTVVLFKKFDEGRADFPVDEELGLDLGDLSRFLVTHSMRLVTEFNSQTSAKIFAARILNHLLLFVNQTLAAHRELLVGFGEAAPHFRGQVLFVVVDVAADNEHVLQYFGLKAEAAPTLRLVNLETTKKYAPVDGGPVTTASITAFCHAVLNGQVKPYLLSQEVPPDWDQRPVKTLVGKNFEQVAFDETKNVFVKFYAPWCTHCKEMAPAWEALAEKYQDHEDVIIAELDATANELDAFAVHGFPTLKYFPAGPGRKVIEYKSTRDLGTFSKFLDNGGVLPTEEPLEEPAAPFPEPPANSTMGSKEEL</sequence>
<feature type="signal peptide" evidence="2">
    <location>
        <begin position="1"/>
        <end position="21"/>
    </location>
</feature>
<feature type="chain" id="PRO_0000034223" description="Protein disulfide-isomerase A2">
    <location>
        <begin position="22"/>
        <end position="525"/>
    </location>
</feature>
<feature type="domain" description="Thioredoxin 1" evidence="3">
    <location>
        <begin position="27"/>
        <end position="152"/>
    </location>
</feature>
<feature type="domain" description="Thioredoxin 2" evidence="3">
    <location>
        <begin position="367"/>
        <end position="496"/>
    </location>
</feature>
<feature type="region of interest" description="Disordered" evidence="5">
    <location>
        <begin position="498"/>
        <end position="525"/>
    </location>
</feature>
<feature type="short sequence motif" description="Prevents secretion from ER" evidence="4">
    <location>
        <begin position="522"/>
        <end position="525"/>
    </location>
</feature>
<feature type="compositionally biased region" description="Polar residues" evidence="5">
    <location>
        <begin position="516"/>
        <end position="525"/>
    </location>
</feature>
<feature type="active site" description="Nucleophile" evidence="1">
    <location>
        <position position="71"/>
    </location>
</feature>
<feature type="active site" description="Nucleophile" evidence="1">
    <location>
        <position position="74"/>
    </location>
</feature>
<feature type="active site" description="Nucleophile" evidence="1">
    <location>
        <position position="418"/>
    </location>
</feature>
<feature type="active site" description="Nucleophile" evidence="1">
    <location>
        <position position="421"/>
    </location>
</feature>
<feature type="site" description="Contributes to redox potential value" evidence="1">
    <location>
        <position position="72"/>
    </location>
</feature>
<feature type="site" description="Contributes to redox potential value" evidence="1">
    <location>
        <position position="73"/>
    </location>
</feature>
<feature type="site" description="Lowers pKa of C-terminal Cys of first active site" evidence="1">
    <location>
        <position position="138"/>
    </location>
</feature>
<feature type="site" description="Contributes to redox potential value" evidence="1">
    <location>
        <position position="419"/>
    </location>
</feature>
<feature type="site" description="Contributes to redox potential value" evidence="1">
    <location>
        <position position="420"/>
    </location>
</feature>
<feature type="site" description="Lowers pKa of C-terminal Cys of second active site" evidence="1">
    <location>
        <position position="482"/>
    </location>
</feature>
<feature type="glycosylation site" description="N-linked (GlcNAc...) asparagine" evidence="2">
    <location>
        <position position="127"/>
    </location>
</feature>
<feature type="glycosylation site" description="N-linked (GlcNAc...) asparagine" evidence="2">
    <location>
        <position position="284"/>
    </location>
</feature>
<feature type="glycosylation site" description="N-linked (GlcNAc...) asparagine" evidence="2">
    <location>
        <position position="516"/>
    </location>
</feature>
<feature type="disulfide bond" description="Interchain" evidence="1">
    <location>
        <position position="18"/>
    </location>
</feature>
<feature type="disulfide bond" description="Redox-active" evidence="3">
    <location>
        <begin position="71"/>
        <end position="74"/>
    </location>
</feature>
<feature type="disulfide bond" description="Redox-active" evidence="3">
    <location>
        <begin position="418"/>
        <end position="421"/>
    </location>
</feature>
<feature type="sequence conflict" description="In Ref. 1; CAH92649." evidence="6" ref="1">
    <original>E</original>
    <variation>G</variation>
    <location>
        <position position="342"/>
    </location>
</feature>
<feature type="sequence conflict" description="In Ref. 1; CAH92649." evidence="6" ref="1">
    <original>G</original>
    <variation>E</variation>
    <location>
        <position position="485"/>
    </location>
</feature>
<feature type="sequence conflict" description="In Ref. 1; CAH92649." evidence="6" ref="1">
    <original>E</original>
    <variation>G</variation>
    <location>
        <position position="505"/>
    </location>
</feature>
<gene>
    <name type="primary">PDIA2</name>
</gene>
<protein>
    <recommendedName>
        <fullName>Protein disulfide-isomerase A2</fullName>
        <ecNumber>5.3.4.1</ecNumber>
    </recommendedName>
</protein>
<keyword id="KW-0143">Chaperone</keyword>
<keyword id="KW-1015">Disulfide bond</keyword>
<keyword id="KW-0256">Endoplasmic reticulum</keyword>
<keyword id="KW-0325">Glycoprotein</keyword>
<keyword id="KW-0413">Isomerase</keyword>
<keyword id="KW-0446">Lipid-binding</keyword>
<keyword id="KW-0676">Redox-active center</keyword>
<keyword id="KW-1185">Reference proteome</keyword>
<keyword id="KW-0677">Repeat</keyword>
<keyword id="KW-0732">Signal</keyword>
<keyword id="KW-0754">Steroid-binding</keyword>
<proteinExistence type="evidence at transcript level"/>
<dbReference type="EC" id="5.3.4.1"/>
<dbReference type="EMBL" id="CR858298">
    <property type="protein sequence ID" value="CAH90535.1"/>
    <property type="molecule type" value="mRNA"/>
</dbReference>
<dbReference type="EMBL" id="CR860523">
    <property type="protein sequence ID" value="CAH92649.1"/>
    <property type="molecule type" value="mRNA"/>
</dbReference>
<dbReference type="RefSeq" id="NP_001125285.1">
    <property type="nucleotide sequence ID" value="NM_001131813.1"/>
</dbReference>
<dbReference type="SMR" id="Q5RCH2"/>
<dbReference type="FunCoup" id="Q5RCH2">
    <property type="interactions" value="141"/>
</dbReference>
<dbReference type="STRING" id="9601.ENSPPYP00000007818"/>
<dbReference type="GlyCosmos" id="Q5RCH2">
    <property type="glycosylation" value="3 sites, No reported glycans"/>
</dbReference>
<dbReference type="GeneID" id="100172183"/>
<dbReference type="KEGG" id="pon:100172183"/>
<dbReference type="CTD" id="64714"/>
<dbReference type="eggNOG" id="KOG0190">
    <property type="taxonomic scope" value="Eukaryota"/>
</dbReference>
<dbReference type="InParanoid" id="Q5RCH2"/>
<dbReference type="OrthoDB" id="72053at2759"/>
<dbReference type="Proteomes" id="UP000001595">
    <property type="component" value="Unplaced"/>
</dbReference>
<dbReference type="GO" id="GO:0005788">
    <property type="term" value="C:endoplasmic reticulum lumen"/>
    <property type="evidence" value="ECO:0007669"/>
    <property type="project" value="UniProtKB-SubCell"/>
</dbReference>
<dbReference type="GO" id="GO:0003756">
    <property type="term" value="F:protein disulfide isomerase activity"/>
    <property type="evidence" value="ECO:0007669"/>
    <property type="project" value="UniProtKB-EC"/>
</dbReference>
<dbReference type="GO" id="GO:0005496">
    <property type="term" value="F:steroid binding"/>
    <property type="evidence" value="ECO:0007669"/>
    <property type="project" value="UniProtKB-KW"/>
</dbReference>
<dbReference type="GO" id="GO:0006457">
    <property type="term" value="P:protein folding"/>
    <property type="evidence" value="ECO:0007669"/>
    <property type="project" value="TreeGrafter"/>
</dbReference>
<dbReference type="GO" id="GO:0034976">
    <property type="term" value="P:response to endoplasmic reticulum stress"/>
    <property type="evidence" value="ECO:0007669"/>
    <property type="project" value="TreeGrafter"/>
</dbReference>
<dbReference type="CDD" id="cd02961">
    <property type="entry name" value="PDI_a_family"/>
    <property type="match status" value="1"/>
</dbReference>
<dbReference type="CDD" id="cd02995">
    <property type="entry name" value="PDI_a_PDI_a'_C"/>
    <property type="match status" value="1"/>
</dbReference>
<dbReference type="CDD" id="cd02982">
    <property type="entry name" value="PDI_b'_family"/>
    <property type="match status" value="1"/>
</dbReference>
<dbReference type="CDD" id="cd02981">
    <property type="entry name" value="PDI_b_family"/>
    <property type="match status" value="1"/>
</dbReference>
<dbReference type="FunFam" id="3.40.30.10:FF:000203">
    <property type="entry name" value="Protein disulfide isomerase family A member 2"/>
    <property type="match status" value="1"/>
</dbReference>
<dbReference type="FunFam" id="3.40.30.10:FF:000023">
    <property type="entry name" value="Protein disulfide-isomerase"/>
    <property type="match status" value="1"/>
</dbReference>
<dbReference type="FunFam" id="3.40.30.10:FF:000027">
    <property type="entry name" value="protein disulfide-isomerase A2"/>
    <property type="match status" value="1"/>
</dbReference>
<dbReference type="FunFam" id="3.40.30.10:FF:000042">
    <property type="entry name" value="protein disulfide-isomerase A2"/>
    <property type="match status" value="1"/>
</dbReference>
<dbReference type="Gene3D" id="3.40.30.10">
    <property type="entry name" value="Glutaredoxin"/>
    <property type="match status" value="4"/>
</dbReference>
<dbReference type="InterPro" id="IPR005792">
    <property type="entry name" value="Prot_disulphide_isomerase"/>
</dbReference>
<dbReference type="InterPro" id="IPR036249">
    <property type="entry name" value="Thioredoxin-like_sf"/>
</dbReference>
<dbReference type="InterPro" id="IPR017937">
    <property type="entry name" value="Thioredoxin_CS"/>
</dbReference>
<dbReference type="InterPro" id="IPR013766">
    <property type="entry name" value="Thioredoxin_domain"/>
</dbReference>
<dbReference type="NCBIfam" id="TIGR01130">
    <property type="entry name" value="ER_PDI_fam"/>
    <property type="match status" value="1"/>
</dbReference>
<dbReference type="PANTHER" id="PTHR18929">
    <property type="entry name" value="PROTEIN DISULFIDE ISOMERASE"/>
    <property type="match status" value="1"/>
</dbReference>
<dbReference type="PANTHER" id="PTHR18929:SF93">
    <property type="entry name" value="PROTEIN DISULFIDE-ISOMERASE A2"/>
    <property type="match status" value="1"/>
</dbReference>
<dbReference type="Pfam" id="PF00085">
    <property type="entry name" value="Thioredoxin"/>
    <property type="match status" value="2"/>
</dbReference>
<dbReference type="Pfam" id="PF13848">
    <property type="entry name" value="Thioredoxin_6"/>
    <property type="match status" value="1"/>
</dbReference>
<dbReference type="PRINTS" id="PR00421">
    <property type="entry name" value="THIOREDOXIN"/>
</dbReference>
<dbReference type="SUPFAM" id="SSF52833">
    <property type="entry name" value="Thioredoxin-like"/>
    <property type="match status" value="4"/>
</dbReference>
<dbReference type="PROSITE" id="PS00014">
    <property type="entry name" value="ER_TARGET"/>
    <property type="match status" value="1"/>
</dbReference>
<dbReference type="PROSITE" id="PS00194">
    <property type="entry name" value="THIOREDOXIN_1"/>
    <property type="match status" value="2"/>
</dbReference>
<dbReference type="PROSITE" id="PS51352">
    <property type="entry name" value="THIOREDOXIN_2"/>
    <property type="match status" value="2"/>
</dbReference>
<organism>
    <name type="scientific">Pongo abelii</name>
    <name type="common">Sumatran orangutan</name>
    <name type="synonym">Pongo pygmaeus abelii</name>
    <dbReference type="NCBI Taxonomy" id="9601"/>
    <lineage>
        <taxon>Eukaryota</taxon>
        <taxon>Metazoa</taxon>
        <taxon>Chordata</taxon>
        <taxon>Craniata</taxon>
        <taxon>Vertebrata</taxon>
        <taxon>Euteleostomi</taxon>
        <taxon>Mammalia</taxon>
        <taxon>Eutheria</taxon>
        <taxon>Euarchontoglires</taxon>
        <taxon>Primates</taxon>
        <taxon>Haplorrhini</taxon>
        <taxon>Catarrhini</taxon>
        <taxon>Hominidae</taxon>
        <taxon>Pongo</taxon>
    </lineage>
</organism>
<comment type="function">
    <text evidence="1">Acts as an intracellular estrogen-binding protein. May be involved in modulating cellular levels and biological functions of estrogens in the pancreas. May act as a chaperone that inhibits aggregation of misfolded proteins (By similarity).</text>
</comment>
<comment type="catalytic activity">
    <reaction>
        <text>Catalyzes the rearrangement of -S-S- bonds in proteins.</text>
        <dbReference type="EC" id="5.3.4.1"/>
    </reaction>
</comment>
<comment type="subunit">
    <text evidence="1">Monomer; predominantly as monomer under reducing conditions. Homodimer; disulfide-linked. Part of a large chaperone multiprotein complex comprising DNAJB11, HSP90B1, HSPA5, HYOU, PDIA2, PDIA4, PDIA6, PPIB, SDF2L1, UGGT1 and very small amounts of ERP29, but not, or at very low levels, CALR nor CANX (By similarity).</text>
</comment>
<comment type="subcellular location">
    <subcellularLocation>
        <location evidence="4">Endoplasmic reticulum lumen</location>
    </subcellularLocation>
</comment>
<comment type="PTM">
    <text evidence="1">The disulfide-linked homodimer exhibits an enhanced chaperone activity.</text>
</comment>
<comment type="PTM">
    <text evidence="1">Glycosylated.</text>
</comment>
<comment type="similarity">
    <text evidence="6">Belongs to the protein disulfide isomerase family.</text>
</comment>
<name>PDIA2_PONAB</name>
<evidence type="ECO:0000250" key="1"/>
<evidence type="ECO:0000255" key="2"/>
<evidence type="ECO:0000255" key="3">
    <source>
        <dbReference type="PROSITE-ProRule" id="PRU00691"/>
    </source>
</evidence>
<evidence type="ECO:0000255" key="4">
    <source>
        <dbReference type="PROSITE-ProRule" id="PRU10138"/>
    </source>
</evidence>
<evidence type="ECO:0000256" key="5">
    <source>
        <dbReference type="SAM" id="MobiDB-lite"/>
    </source>
</evidence>
<evidence type="ECO:0000305" key="6"/>